<protein>
    <recommendedName>
        <fullName>Probable catabolite repression protein creC</fullName>
    </recommendedName>
</protein>
<keyword id="KW-1185">Reference proteome</keyword>
<keyword id="KW-0677">Repeat</keyword>
<keyword id="KW-0804">Transcription</keyword>
<keyword id="KW-0805">Transcription regulation</keyword>
<keyword id="KW-0833">Ubl conjugation pathway</keyword>
<keyword id="KW-0853">WD repeat</keyword>
<sequence length="588" mass="64593">MFVLPPPPPRYTIPVAYAAGASNGMAVPVVETNNVITKPEGGCPLQVGEGTYHLQDDLHLATPPPHPSEAPIINPNPLATVPTPPTSGVKLSLVNIGPRNKNPVFAMKESVLAPPFGDGNPALAAPAVKDGLKRRKPKNNIIKSSSSFVSRVITHEASTKRLNDRNPEGLFAFANINRAFQWLDLGSKQKEEPLAKILFTKAHMLSHDINELTKSASHIDVVMGSSAGDIIWYEPISQKYARINKNGVVCNSPVTHIKWVPGSENLFMAAHANGQLVVYDKEKEDALFTPEEPVKSSGQQPLQVLKSVNSRNQKTNPVALWKLANQKITQFAFSPDQRHLAVVLEDGSLRVMDYLEEEVLDIFRSYYGGLICVCWSPDGKYIVTGGQDDLVTIWSFPERKIVARCQGHNSWVSTVAFDPWRCDERTYRFGSVGDDCRLLLWDFSVGMLHRPRAHQASTRQRTSMITSNSQHASRHRADSAGNRARSDSQRTADGYDEYDQAVRHPVEPRARTALLPPIMSKEIGSDPICWLGFQEDSIMTSSLEGHIRTWDRPREGINDTYNAHASSSAISAGAGSGSAVANSARGSL</sequence>
<proteinExistence type="inferred from homology"/>
<name>CREC_ASPTN</name>
<dbReference type="EMBL" id="CH476601">
    <property type="protein sequence ID" value="EAU33634.1"/>
    <property type="molecule type" value="Genomic_DNA"/>
</dbReference>
<dbReference type="RefSeq" id="XP_001215051.1">
    <property type="nucleotide sequence ID" value="XM_001215051.1"/>
</dbReference>
<dbReference type="SMR" id="Q0CKB1"/>
<dbReference type="STRING" id="341663.Q0CKB1"/>
<dbReference type="EnsemblFungi" id="EAU33634">
    <property type="protein sequence ID" value="EAU33634"/>
    <property type="gene ID" value="ATEG_05873"/>
</dbReference>
<dbReference type="GeneID" id="4321379"/>
<dbReference type="VEuPathDB" id="FungiDB:ATEG_05873"/>
<dbReference type="eggNOG" id="KOG2394">
    <property type="taxonomic scope" value="Eukaryota"/>
</dbReference>
<dbReference type="HOGENOM" id="CLU_016971_1_1_1"/>
<dbReference type="OMA" id="MCVCWSP"/>
<dbReference type="OrthoDB" id="3367at2759"/>
<dbReference type="Proteomes" id="UP000007963">
    <property type="component" value="Unassembled WGS sequence"/>
</dbReference>
<dbReference type="GO" id="GO:0032153">
    <property type="term" value="C:cell division site"/>
    <property type="evidence" value="ECO:0007669"/>
    <property type="project" value="TreeGrafter"/>
</dbReference>
<dbReference type="GO" id="GO:0051286">
    <property type="term" value="C:cell tip"/>
    <property type="evidence" value="ECO:0007669"/>
    <property type="project" value="TreeGrafter"/>
</dbReference>
<dbReference type="GO" id="GO:0005634">
    <property type="term" value="C:nucleus"/>
    <property type="evidence" value="ECO:0007669"/>
    <property type="project" value="TreeGrafter"/>
</dbReference>
<dbReference type="GO" id="GO:0045013">
    <property type="term" value="P:carbon catabolite repression of transcription"/>
    <property type="evidence" value="ECO:0000250"/>
    <property type="project" value="UniProtKB"/>
</dbReference>
<dbReference type="FunFam" id="2.130.10.10:FF:000531">
    <property type="entry name" value="Probable catabolite repression protein creC"/>
    <property type="match status" value="1"/>
</dbReference>
<dbReference type="Gene3D" id="2.130.10.10">
    <property type="entry name" value="YVTN repeat-like/Quinoprotein amine dehydrogenase"/>
    <property type="match status" value="1"/>
</dbReference>
<dbReference type="InterPro" id="IPR015943">
    <property type="entry name" value="WD40/YVTN_repeat-like_dom_sf"/>
</dbReference>
<dbReference type="InterPro" id="IPR036322">
    <property type="entry name" value="WD40_repeat_dom_sf"/>
</dbReference>
<dbReference type="InterPro" id="IPR001680">
    <property type="entry name" value="WD40_rpt"/>
</dbReference>
<dbReference type="InterPro" id="IPR051362">
    <property type="entry name" value="WD_repeat_creC_regulators"/>
</dbReference>
<dbReference type="PANTHER" id="PTHR14107:SF16">
    <property type="entry name" value="AT02583P"/>
    <property type="match status" value="1"/>
</dbReference>
<dbReference type="PANTHER" id="PTHR14107">
    <property type="entry name" value="WD REPEAT PROTEIN"/>
    <property type="match status" value="1"/>
</dbReference>
<dbReference type="Pfam" id="PF00400">
    <property type="entry name" value="WD40"/>
    <property type="match status" value="1"/>
</dbReference>
<dbReference type="SMART" id="SM00320">
    <property type="entry name" value="WD40"/>
    <property type="match status" value="5"/>
</dbReference>
<dbReference type="SUPFAM" id="SSF50978">
    <property type="entry name" value="WD40 repeat-like"/>
    <property type="match status" value="1"/>
</dbReference>
<dbReference type="PROSITE" id="PS50082">
    <property type="entry name" value="WD_REPEATS_2"/>
    <property type="match status" value="1"/>
</dbReference>
<dbReference type="PROSITE" id="PS50294">
    <property type="entry name" value="WD_REPEATS_REGION"/>
    <property type="match status" value="1"/>
</dbReference>
<feature type="chain" id="PRO_0000395692" description="Probable catabolite repression protein creC">
    <location>
        <begin position="1"/>
        <end position="588"/>
    </location>
</feature>
<feature type="repeat" description="WD 1">
    <location>
        <begin position="249"/>
        <end position="289"/>
    </location>
</feature>
<feature type="repeat" description="WD 2">
    <location>
        <begin position="323"/>
        <end position="364"/>
    </location>
</feature>
<feature type="repeat" description="WD 3">
    <location>
        <begin position="365"/>
        <end position="404"/>
    </location>
</feature>
<feature type="repeat" description="WD 4">
    <location>
        <begin position="407"/>
        <end position="451"/>
    </location>
</feature>
<feature type="repeat" description="WD 5">
    <location>
        <begin position="523"/>
        <end position="560"/>
    </location>
</feature>
<feature type="region of interest" description="Disordered" evidence="2">
    <location>
        <begin position="452"/>
        <end position="499"/>
    </location>
</feature>
<feature type="region of interest" description="Disordered" evidence="2">
    <location>
        <begin position="569"/>
        <end position="588"/>
    </location>
</feature>
<feature type="compositionally biased region" description="Polar residues" evidence="2">
    <location>
        <begin position="455"/>
        <end position="471"/>
    </location>
</feature>
<organism>
    <name type="scientific">Aspergillus terreus (strain NIH 2624 / FGSC A1156)</name>
    <dbReference type="NCBI Taxonomy" id="341663"/>
    <lineage>
        <taxon>Eukaryota</taxon>
        <taxon>Fungi</taxon>
        <taxon>Dikarya</taxon>
        <taxon>Ascomycota</taxon>
        <taxon>Pezizomycotina</taxon>
        <taxon>Eurotiomycetes</taxon>
        <taxon>Eurotiomycetidae</taxon>
        <taxon>Eurotiales</taxon>
        <taxon>Aspergillaceae</taxon>
        <taxon>Aspergillus</taxon>
        <taxon>Aspergillus subgen. Circumdati</taxon>
    </lineage>
</organism>
<gene>
    <name type="primary">creC</name>
    <name type="ORF">ATEG_05873</name>
</gene>
<evidence type="ECO:0000250" key="1"/>
<evidence type="ECO:0000256" key="2">
    <source>
        <dbReference type="SAM" id="MobiDB-lite"/>
    </source>
</evidence>
<evidence type="ECO:0000305" key="3"/>
<comment type="function">
    <text evidence="1">Component of the regulatory network controlling carbon source utilization through ubiquitination and deubiquitination involving creA, creB, creC, creD and acrB. Required to prevent the proteolysis of the CreB deubiquitinating enzyme in the absence of carbon catabolite repression. CreB deubiquitinating enzyme stabilized in a complex with the CreC leads to the expression of genes such as those in the proline and quinate pathways (By similarity).</text>
</comment>
<comment type="subunit">
    <text evidence="1">Interacts with creB.</text>
</comment>
<comment type="similarity">
    <text evidence="3">Belongs to the WD repeat creC family.</text>
</comment>
<accession>Q0CKB1</accession>
<reference key="1">
    <citation type="submission" date="2005-09" db="EMBL/GenBank/DDBJ databases">
        <title>Annotation of the Aspergillus terreus NIH2624 genome.</title>
        <authorList>
            <person name="Birren B.W."/>
            <person name="Lander E.S."/>
            <person name="Galagan J.E."/>
            <person name="Nusbaum C."/>
            <person name="Devon K."/>
            <person name="Henn M."/>
            <person name="Ma L.-J."/>
            <person name="Jaffe D.B."/>
            <person name="Butler J."/>
            <person name="Alvarez P."/>
            <person name="Gnerre S."/>
            <person name="Grabherr M."/>
            <person name="Kleber M."/>
            <person name="Mauceli E.W."/>
            <person name="Brockman W."/>
            <person name="Rounsley S."/>
            <person name="Young S.K."/>
            <person name="LaButti K."/>
            <person name="Pushparaj V."/>
            <person name="DeCaprio D."/>
            <person name="Crawford M."/>
            <person name="Koehrsen M."/>
            <person name="Engels R."/>
            <person name="Montgomery P."/>
            <person name="Pearson M."/>
            <person name="Howarth C."/>
            <person name="Larson L."/>
            <person name="Luoma S."/>
            <person name="White J."/>
            <person name="Alvarado L."/>
            <person name="Kodira C.D."/>
            <person name="Zeng Q."/>
            <person name="Oleary S."/>
            <person name="Yandava C."/>
            <person name="Denning D.W."/>
            <person name="Nierman W.C."/>
            <person name="Milne T."/>
            <person name="Madden K."/>
        </authorList>
    </citation>
    <scope>NUCLEOTIDE SEQUENCE [LARGE SCALE GENOMIC DNA]</scope>
    <source>
        <strain>NIH 2624 / FGSC A1156</strain>
    </source>
</reference>